<dbReference type="EC" id="2.7.7.8" evidence="1"/>
<dbReference type="EMBL" id="CP000805">
    <property type="protein sequence ID" value="ACD71302.1"/>
    <property type="molecule type" value="Genomic_DNA"/>
</dbReference>
<dbReference type="RefSeq" id="WP_010882329.1">
    <property type="nucleotide sequence ID" value="NC_021508.1"/>
</dbReference>
<dbReference type="SMR" id="B2S4C3"/>
<dbReference type="GeneID" id="93876640"/>
<dbReference type="KEGG" id="tpp:TPASS_0886"/>
<dbReference type="PATRIC" id="fig|455434.6.peg.873"/>
<dbReference type="Proteomes" id="UP000001202">
    <property type="component" value="Chromosome"/>
</dbReference>
<dbReference type="GO" id="GO:0005829">
    <property type="term" value="C:cytosol"/>
    <property type="evidence" value="ECO:0007669"/>
    <property type="project" value="TreeGrafter"/>
</dbReference>
<dbReference type="GO" id="GO:0000175">
    <property type="term" value="F:3'-5'-RNA exonuclease activity"/>
    <property type="evidence" value="ECO:0007669"/>
    <property type="project" value="TreeGrafter"/>
</dbReference>
<dbReference type="GO" id="GO:0000287">
    <property type="term" value="F:magnesium ion binding"/>
    <property type="evidence" value="ECO:0007669"/>
    <property type="project" value="UniProtKB-UniRule"/>
</dbReference>
<dbReference type="GO" id="GO:0004654">
    <property type="term" value="F:polyribonucleotide nucleotidyltransferase activity"/>
    <property type="evidence" value="ECO:0007669"/>
    <property type="project" value="UniProtKB-UniRule"/>
</dbReference>
<dbReference type="GO" id="GO:0003723">
    <property type="term" value="F:RNA binding"/>
    <property type="evidence" value="ECO:0007669"/>
    <property type="project" value="UniProtKB-UniRule"/>
</dbReference>
<dbReference type="GO" id="GO:0006402">
    <property type="term" value="P:mRNA catabolic process"/>
    <property type="evidence" value="ECO:0007669"/>
    <property type="project" value="UniProtKB-UniRule"/>
</dbReference>
<dbReference type="GO" id="GO:0006396">
    <property type="term" value="P:RNA processing"/>
    <property type="evidence" value="ECO:0007669"/>
    <property type="project" value="InterPro"/>
</dbReference>
<dbReference type="CDD" id="cd02393">
    <property type="entry name" value="KH-I_PNPase"/>
    <property type="match status" value="1"/>
</dbReference>
<dbReference type="CDD" id="cd11363">
    <property type="entry name" value="RNase_PH_PNPase_1"/>
    <property type="match status" value="1"/>
</dbReference>
<dbReference type="CDD" id="cd11364">
    <property type="entry name" value="RNase_PH_PNPase_2"/>
    <property type="match status" value="1"/>
</dbReference>
<dbReference type="CDD" id="cd04472">
    <property type="entry name" value="S1_PNPase"/>
    <property type="match status" value="1"/>
</dbReference>
<dbReference type="FunFam" id="3.30.1370.10:FF:000001">
    <property type="entry name" value="Polyribonucleotide nucleotidyltransferase"/>
    <property type="match status" value="1"/>
</dbReference>
<dbReference type="FunFam" id="3.30.230.70:FF:000001">
    <property type="entry name" value="Polyribonucleotide nucleotidyltransferase"/>
    <property type="match status" value="1"/>
</dbReference>
<dbReference type="FunFam" id="3.30.230.70:FF:000002">
    <property type="entry name" value="Polyribonucleotide nucleotidyltransferase"/>
    <property type="match status" value="1"/>
</dbReference>
<dbReference type="FunFam" id="2.40.50.140:FF:000189">
    <property type="entry name" value="Polyribonucleotide nucleotidyltransferase, putative"/>
    <property type="match status" value="1"/>
</dbReference>
<dbReference type="Gene3D" id="3.30.230.70">
    <property type="entry name" value="GHMP Kinase, N-terminal domain"/>
    <property type="match status" value="2"/>
</dbReference>
<dbReference type="Gene3D" id="3.30.1370.10">
    <property type="entry name" value="K Homology domain, type 1"/>
    <property type="match status" value="1"/>
</dbReference>
<dbReference type="Gene3D" id="2.40.50.140">
    <property type="entry name" value="Nucleic acid-binding proteins"/>
    <property type="match status" value="1"/>
</dbReference>
<dbReference type="HAMAP" id="MF_01595">
    <property type="entry name" value="PNPase"/>
    <property type="match status" value="1"/>
</dbReference>
<dbReference type="InterPro" id="IPR001247">
    <property type="entry name" value="ExoRNase_PH_dom1"/>
</dbReference>
<dbReference type="InterPro" id="IPR015847">
    <property type="entry name" value="ExoRNase_PH_dom2"/>
</dbReference>
<dbReference type="InterPro" id="IPR036345">
    <property type="entry name" value="ExoRNase_PH_dom2_sf"/>
</dbReference>
<dbReference type="InterPro" id="IPR004087">
    <property type="entry name" value="KH_dom"/>
</dbReference>
<dbReference type="InterPro" id="IPR004088">
    <property type="entry name" value="KH_dom_type_1"/>
</dbReference>
<dbReference type="InterPro" id="IPR036612">
    <property type="entry name" value="KH_dom_type_1_sf"/>
</dbReference>
<dbReference type="InterPro" id="IPR012340">
    <property type="entry name" value="NA-bd_OB-fold"/>
</dbReference>
<dbReference type="InterPro" id="IPR012162">
    <property type="entry name" value="PNPase"/>
</dbReference>
<dbReference type="InterPro" id="IPR027408">
    <property type="entry name" value="PNPase/RNase_PH_dom_sf"/>
</dbReference>
<dbReference type="InterPro" id="IPR015848">
    <property type="entry name" value="PNPase_PH_RNA-bd_bac/org-type"/>
</dbReference>
<dbReference type="InterPro" id="IPR036456">
    <property type="entry name" value="PNPase_PH_RNA-bd_sf"/>
</dbReference>
<dbReference type="InterPro" id="IPR020568">
    <property type="entry name" value="Ribosomal_Su5_D2-typ_SF"/>
</dbReference>
<dbReference type="InterPro" id="IPR003029">
    <property type="entry name" value="S1_domain"/>
</dbReference>
<dbReference type="NCBIfam" id="TIGR03591">
    <property type="entry name" value="polynuc_phos"/>
    <property type="match status" value="1"/>
</dbReference>
<dbReference type="NCBIfam" id="NF008805">
    <property type="entry name" value="PRK11824.1"/>
    <property type="match status" value="1"/>
</dbReference>
<dbReference type="PANTHER" id="PTHR11252">
    <property type="entry name" value="POLYRIBONUCLEOTIDE NUCLEOTIDYLTRANSFERASE"/>
    <property type="match status" value="1"/>
</dbReference>
<dbReference type="PANTHER" id="PTHR11252:SF0">
    <property type="entry name" value="POLYRIBONUCLEOTIDE NUCLEOTIDYLTRANSFERASE 1, MITOCHONDRIAL"/>
    <property type="match status" value="1"/>
</dbReference>
<dbReference type="Pfam" id="PF00013">
    <property type="entry name" value="KH_1"/>
    <property type="match status" value="1"/>
</dbReference>
<dbReference type="Pfam" id="PF03726">
    <property type="entry name" value="PNPase"/>
    <property type="match status" value="1"/>
</dbReference>
<dbReference type="Pfam" id="PF01138">
    <property type="entry name" value="RNase_PH"/>
    <property type="match status" value="2"/>
</dbReference>
<dbReference type="Pfam" id="PF03725">
    <property type="entry name" value="RNase_PH_C"/>
    <property type="match status" value="1"/>
</dbReference>
<dbReference type="Pfam" id="PF00575">
    <property type="entry name" value="S1"/>
    <property type="match status" value="1"/>
</dbReference>
<dbReference type="PIRSF" id="PIRSF005499">
    <property type="entry name" value="PNPase"/>
    <property type="match status" value="1"/>
</dbReference>
<dbReference type="SMART" id="SM00322">
    <property type="entry name" value="KH"/>
    <property type="match status" value="1"/>
</dbReference>
<dbReference type="SMART" id="SM00316">
    <property type="entry name" value="S1"/>
    <property type="match status" value="1"/>
</dbReference>
<dbReference type="SUPFAM" id="SSF54791">
    <property type="entry name" value="Eukaryotic type KH-domain (KH-domain type I)"/>
    <property type="match status" value="1"/>
</dbReference>
<dbReference type="SUPFAM" id="SSF50249">
    <property type="entry name" value="Nucleic acid-binding proteins"/>
    <property type="match status" value="1"/>
</dbReference>
<dbReference type="SUPFAM" id="SSF46915">
    <property type="entry name" value="Polynucleotide phosphorylase/guanosine pentaphosphate synthase (PNPase/GPSI), domain 3"/>
    <property type="match status" value="1"/>
</dbReference>
<dbReference type="SUPFAM" id="SSF55666">
    <property type="entry name" value="Ribonuclease PH domain 2-like"/>
    <property type="match status" value="2"/>
</dbReference>
<dbReference type="SUPFAM" id="SSF54211">
    <property type="entry name" value="Ribosomal protein S5 domain 2-like"/>
    <property type="match status" value="2"/>
</dbReference>
<dbReference type="PROSITE" id="PS50084">
    <property type="entry name" value="KH_TYPE_1"/>
    <property type="match status" value="1"/>
</dbReference>
<dbReference type="PROSITE" id="PS50126">
    <property type="entry name" value="S1"/>
    <property type="match status" value="1"/>
</dbReference>
<sequence>MKHSITGTIGDHPLLLESGYLARQANGSVYLQCEGTAILATVCSSAQRQEGLDYVPLTVDFNEKYYAVGKMPGGFIKREGRPKDREILISRLIDRPMRPLFEKEFGRDIHVVPTCISSDMVHPHDVLAIVASSAAVTLSDIPFHGPVAAVRVAYLNGSYVINPTFSQIDAASMEVVVAGTRQGITMVEGGAREVSEDLMLGALEQAQEHIKALCDMQERLRGLCGKEKQTVIPSSAQLVGRDRIYELAYPRLAQALYAQGKGERRSACDAVKRDVAQQYAAQLENDVQRRLFDALFHEMEYEILRLNILDRGLRIDGRAIDAIRPIACEVGVLPRPHGSAVFTRGETQSLAVVTLGAMSDGQVYDDIEGDRRENFILHYNFPPFSVGEIGRMGVGRREIGHGCLAHRSLSAVIPDPEQFPYTVRVVSEILESNGSSSMATVCSGTLSLLHAGVPIKKPVAGIAMGLITDGVRYAILSDILGEEDHLGDMDFKVAGTCDGITGFQMDVKVEAVSASLMKEALQQARVGRLHILSVMNQTISAPSVHISRYAPHIESFKIAVEKIGALIGPGGKTVKSLSDQYRVTINTDSDGTVTVSGRDAQSVFDAKVAVVGLTEDPRVGRVYQGVVKRIVEFGAFVEIFPGKEGLCHVSKLSRSRVSKVSDVLQEGQRICVKLIDIDRMGRLNLSYIDALEGKSGGLDTTK</sequence>
<keyword id="KW-0963">Cytoplasm</keyword>
<keyword id="KW-0460">Magnesium</keyword>
<keyword id="KW-0479">Metal-binding</keyword>
<keyword id="KW-0548">Nucleotidyltransferase</keyword>
<keyword id="KW-0694">RNA-binding</keyword>
<keyword id="KW-0808">Transferase</keyword>
<reference key="1">
    <citation type="journal article" date="2008" name="BMC Microbiol.">
        <title>Complete genome sequence of Treponema pallidum ssp. pallidum strain SS14 determined with oligonucleotide arrays.</title>
        <authorList>
            <person name="Matejkova P."/>
            <person name="Strouhal M."/>
            <person name="Smajs D."/>
            <person name="Norris S.J."/>
            <person name="Palzkill T."/>
            <person name="Petrosino J.F."/>
            <person name="Sodergren E."/>
            <person name="Norton J.E."/>
            <person name="Singh J."/>
            <person name="Richmond T.A."/>
            <person name="Molla M.N."/>
            <person name="Albert T.J."/>
            <person name="Weinstock G.M."/>
        </authorList>
    </citation>
    <scope>NUCLEOTIDE SEQUENCE [LARGE SCALE GENOMIC DNA]</scope>
    <source>
        <strain>SS14</strain>
    </source>
</reference>
<proteinExistence type="inferred from homology"/>
<name>PNP_TREPS</name>
<gene>
    <name evidence="1" type="primary">pnp</name>
    <name type="ordered locus">TPASS_0886</name>
</gene>
<organism>
    <name type="scientific">Treponema pallidum subsp. pallidum (strain SS14)</name>
    <dbReference type="NCBI Taxonomy" id="455434"/>
    <lineage>
        <taxon>Bacteria</taxon>
        <taxon>Pseudomonadati</taxon>
        <taxon>Spirochaetota</taxon>
        <taxon>Spirochaetia</taxon>
        <taxon>Spirochaetales</taxon>
        <taxon>Treponemataceae</taxon>
        <taxon>Treponema</taxon>
    </lineage>
</organism>
<feature type="chain" id="PRO_1000192502" description="Polyribonucleotide nucleotidyltransferase">
    <location>
        <begin position="1"/>
        <end position="702"/>
    </location>
</feature>
<feature type="domain" description="KH" evidence="1">
    <location>
        <begin position="551"/>
        <end position="610"/>
    </location>
</feature>
<feature type="domain" description="S1 motif" evidence="1">
    <location>
        <begin position="620"/>
        <end position="688"/>
    </location>
</feature>
<feature type="binding site" evidence="1">
    <location>
        <position position="484"/>
    </location>
    <ligand>
        <name>Mg(2+)</name>
        <dbReference type="ChEBI" id="CHEBI:18420"/>
    </ligand>
</feature>
<feature type="binding site" evidence="1">
    <location>
        <position position="490"/>
    </location>
    <ligand>
        <name>Mg(2+)</name>
        <dbReference type="ChEBI" id="CHEBI:18420"/>
    </ligand>
</feature>
<comment type="function">
    <text evidence="1">Involved in mRNA degradation. Catalyzes the phosphorolysis of single-stranded polyribonucleotides processively in the 3'- to 5'-direction.</text>
</comment>
<comment type="catalytic activity">
    <reaction evidence="1">
        <text>RNA(n+1) + phosphate = RNA(n) + a ribonucleoside 5'-diphosphate</text>
        <dbReference type="Rhea" id="RHEA:22096"/>
        <dbReference type="Rhea" id="RHEA-COMP:14527"/>
        <dbReference type="Rhea" id="RHEA-COMP:17342"/>
        <dbReference type="ChEBI" id="CHEBI:43474"/>
        <dbReference type="ChEBI" id="CHEBI:57930"/>
        <dbReference type="ChEBI" id="CHEBI:140395"/>
        <dbReference type="EC" id="2.7.7.8"/>
    </reaction>
</comment>
<comment type="cofactor">
    <cofactor evidence="1">
        <name>Mg(2+)</name>
        <dbReference type="ChEBI" id="CHEBI:18420"/>
    </cofactor>
</comment>
<comment type="subcellular location">
    <subcellularLocation>
        <location evidence="1">Cytoplasm</location>
    </subcellularLocation>
</comment>
<comment type="similarity">
    <text evidence="1">Belongs to the polyribonucleotide nucleotidyltransferase family.</text>
</comment>
<accession>B2S4C3</accession>
<evidence type="ECO:0000255" key="1">
    <source>
        <dbReference type="HAMAP-Rule" id="MF_01595"/>
    </source>
</evidence>
<protein>
    <recommendedName>
        <fullName evidence="1">Polyribonucleotide nucleotidyltransferase</fullName>
        <ecNumber evidence="1">2.7.7.8</ecNumber>
    </recommendedName>
    <alternativeName>
        <fullName evidence="1">Polynucleotide phosphorylase</fullName>
        <shortName evidence="1">PNPase</shortName>
    </alternativeName>
</protein>